<feature type="chain" id="PRO_1000013746" description="tRNA uridine(34) hydroxylase">
    <location>
        <begin position="1"/>
        <end position="254"/>
    </location>
</feature>
<feature type="domain" description="Rhodanese" evidence="1">
    <location>
        <begin position="123"/>
        <end position="217"/>
    </location>
</feature>
<feature type="active site" description="Cysteine persulfide intermediate" evidence="1">
    <location>
        <position position="177"/>
    </location>
</feature>
<reference key="1">
    <citation type="submission" date="2006-11" db="EMBL/GenBank/DDBJ databases">
        <title>Identification and characterization of a new conjugation/ type IVA secretion system (trb/tra) of L. pneumophila Corby localized on a mobile genomic island.</title>
        <authorList>
            <person name="Gloeckner G."/>
            <person name="Albert-Weissenberger C."/>
            <person name="Weinmann E."/>
            <person name="Jacobi S."/>
            <person name="Schunder E."/>
            <person name="Steinert M."/>
            <person name="Buchrieser C."/>
            <person name="Hacker J."/>
            <person name="Heuner K."/>
        </authorList>
    </citation>
    <scope>NUCLEOTIDE SEQUENCE [LARGE SCALE GENOMIC DNA]</scope>
    <source>
        <strain>Corby</strain>
    </source>
</reference>
<dbReference type="EC" id="1.14.-.-" evidence="1"/>
<dbReference type="EMBL" id="CP000675">
    <property type="protein sequence ID" value="ABQ57009.1"/>
    <property type="molecule type" value="Genomic_DNA"/>
</dbReference>
<dbReference type="RefSeq" id="WP_011947719.1">
    <property type="nucleotide sequence ID" value="NZ_JAPMSS010000004.1"/>
</dbReference>
<dbReference type="SMR" id="A5II09"/>
<dbReference type="KEGG" id="lpc:LPC_3122"/>
<dbReference type="HOGENOM" id="CLU_038878_0_1_6"/>
<dbReference type="GO" id="GO:0016705">
    <property type="term" value="F:oxidoreductase activity, acting on paired donors, with incorporation or reduction of molecular oxygen"/>
    <property type="evidence" value="ECO:0007669"/>
    <property type="project" value="UniProtKB-UniRule"/>
</dbReference>
<dbReference type="GO" id="GO:0006400">
    <property type="term" value="P:tRNA modification"/>
    <property type="evidence" value="ECO:0007669"/>
    <property type="project" value="UniProtKB-UniRule"/>
</dbReference>
<dbReference type="CDD" id="cd01518">
    <property type="entry name" value="RHOD_YceA"/>
    <property type="match status" value="1"/>
</dbReference>
<dbReference type="Gene3D" id="3.30.70.100">
    <property type="match status" value="1"/>
</dbReference>
<dbReference type="Gene3D" id="3.40.250.10">
    <property type="entry name" value="Rhodanese-like domain"/>
    <property type="match status" value="1"/>
</dbReference>
<dbReference type="HAMAP" id="MF_00469">
    <property type="entry name" value="TrhO"/>
    <property type="match status" value="1"/>
</dbReference>
<dbReference type="InterPro" id="IPR001763">
    <property type="entry name" value="Rhodanese-like_dom"/>
</dbReference>
<dbReference type="InterPro" id="IPR036873">
    <property type="entry name" value="Rhodanese-like_dom_sf"/>
</dbReference>
<dbReference type="InterPro" id="IPR020936">
    <property type="entry name" value="TrhO"/>
</dbReference>
<dbReference type="InterPro" id="IPR040503">
    <property type="entry name" value="TRHO_N"/>
</dbReference>
<dbReference type="NCBIfam" id="NF001135">
    <property type="entry name" value="PRK00142.1-3"/>
    <property type="match status" value="1"/>
</dbReference>
<dbReference type="NCBIfam" id="NF001136">
    <property type="entry name" value="PRK00142.1-4"/>
    <property type="match status" value="1"/>
</dbReference>
<dbReference type="PANTHER" id="PTHR43268:SF3">
    <property type="entry name" value="RHODANESE-LIKE DOMAIN-CONTAINING PROTEIN 7-RELATED"/>
    <property type="match status" value="1"/>
</dbReference>
<dbReference type="PANTHER" id="PTHR43268">
    <property type="entry name" value="THIOSULFATE SULFURTRANSFERASE/RHODANESE-LIKE DOMAIN-CONTAINING PROTEIN 2"/>
    <property type="match status" value="1"/>
</dbReference>
<dbReference type="Pfam" id="PF00581">
    <property type="entry name" value="Rhodanese"/>
    <property type="match status" value="1"/>
</dbReference>
<dbReference type="Pfam" id="PF17773">
    <property type="entry name" value="UPF0176_N"/>
    <property type="match status" value="1"/>
</dbReference>
<dbReference type="SMART" id="SM00450">
    <property type="entry name" value="RHOD"/>
    <property type="match status" value="1"/>
</dbReference>
<dbReference type="SUPFAM" id="SSF52821">
    <property type="entry name" value="Rhodanese/Cell cycle control phosphatase"/>
    <property type="match status" value="1"/>
</dbReference>
<dbReference type="PROSITE" id="PS50206">
    <property type="entry name" value="RHODANESE_3"/>
    <property type="match status" value="1"/>
</dbReference>
<name>TRHO_LEGPC</name>
<organism>
    <name type="scientific">Legionella pneumophila (strain Corby)</name>
    <dbReference type="NCBI Taxonomy" id="400673"/>
    <lineage>
        <taxon>Bacteria</taxon>
        <taxon>Pseudomonadati</taxon>
        <taxon>Pseudomonadota</taxon>
        <taxon>Gammaproteobacteria</taxon>
        <taxon>Legionellales</taxon>
        <taxon>Legionellaceae</taxon>
        <taxon>Legionella</taxon>
    </lineage>
</organism>
<protein>
    <recommendedName>
        <fullName evidence="1">tRNA uridine(34) hydroxylase</fullName>
        <ecNumber evidence="1">1.14.-.-</ecNumber>
    </recommendedName>
    <alternativeName>
        <fullName evidence="1">tRNA hydroxylation protein O</fullName>
    </alternativeName>
</protein>
<proteinExistence type="inferred from homology"/>
<keyword id="KW-0560">Oxidoreductase</keyword>
<keyword id="KW-0819">tRNA processing</keyword>
<comment type="function">
    <text evidence="1">Catalyzes oxygen-dependent 5-hydroxyuridine (ho5U) modification at position 34 in tRNAs.</text>
</comment>
<comment type="catalytic activity">
    <reaction evidence="1">
        <text>uridine(34) in tRNA + AH2 + O2 = 5-hydroxyuridine(34) in tRNA + A + H2O</text>
        <dbReference type="Rhea" id="RHEA:64224"/>
        <dbReference type="Rhea" id="RHEA-COMP:11727"/>
        <dbReference type="Rhea" id="RHEA-COMP:13381"/>
        <dbReference type="ChEBI" id="CHEBI:13193"/>
        <dbReference type="ChEBI" id="CHEBI:15377"/>
        <dbReference type="ChEBI" id="CHEBI:15379"/>
        <dbReference type="ChEBI" id="CHEBI:17499"/>
        <dbReference type="ChEBI" id="CHEBI:65315"/>
        <dbReference type="ChEBI" id="CHEBI:136877"/>
    </reaction>
</comment>
<comment type="similarity">
    <text evidence="1">Belongs to the TrhO family.</text>
</comment>
<evidence type="ECO:0000255" key="1">
    <source>
        <dbReference type="HAMAP-Rule" id="MF_00469"/>
    </source>
</evidence>
<sequence>MKDIIIASFYKFIPLNDFESLREPILTKMHEIGIKGTIILAHEGVNGGFAGNREQMNVFYDYLRSDSRFADLHFKETYDSKNPFDKAKVKLRKEIVTMGVQKVDPSYNAGTYLSPEEWHQFIQDPNVILLDTRNDYEYELGTFKNAINPDIENFREFPDYVQRNLIDKKDKKIAMFCTGGIRCEKTTAYMKELGFQHVYQLHDGILNYLESIPESESLWEGKCFVFDDRVAVDQKLDRVYPQLPQDYKYEREQK</sequence>
<accession>A5II09</accession>
<gene>
    <name evidence="1" type="primary">trhO</name>
    <name type="ordered locus">LPC_3122</name>
</gene>